<feature type="chain" id="PRO_0000408089" description="Putative antitoxin VapB5">
    <location>
        <begin position="1"/>
        <end position="107"/>
    </location>
</feature>
<feature type="transmembrane region" description="Helical" evidence="1">
    <location>
        <begin position="3"/>
        <end position="23"/>
    </location>
</feature>
<feature type="transmembrane region" description="Helical" evidence="1">
    <location>
        <begin position="65"/>
        <end position="85"/>
    </location>
</feature>
<sequence length="107" mass="11649">MQGPVIIPLISTLGLSFLAILLAYKISFSVIGFINSTLPTTLFPSKPYMLFVKISTISPLTCPSLIILTPALTWSLTALSMAYLYSSYKPNTFFTLSKNVSSFLTTG</sequence>
<accession>P0CW39</accession>
<gene>
    <name type="primary">vapB5</name>
    <name type="ordered locus">MJ1473.1</name>
</gene>
<reference key="1">
    <citation type="journal article" date="1996" name="Science">
        <title>Complete genome sequence of the methanogenic archaeon, Methanococcus jannaschii.</title>
        <authorList>
            <person name="Bult C.J."/>
            <person name="White O."/>
            <person name="Olsen G.J."/>
            <person name="Zhou L."/>
            <person name="Fleischmann R.D."/>
            <person name="Sutton G.G."/>
            <person name="Blake J.A."/>
            <person name="FitzGerald L.M."/>
            <person name="Clayton R.A."/>
            <person name="Gocayne J.D."/>
            <person name="Kerlavage A.R."/>
            <person name="Dougherty B.A."/>
            <person name="Tomb J.-F."/>
            <person name="Adams M.D."/>
            <person name="Reich C.I."/>
            <person name="Overbeek R."/>
            <person name="Kirkness E.F."/>
            <person name="Weinstock K.G."/>
            <person name="Merrick J.M."/>
            <person name="Glodek A."/>
            <person name="Scott J.L."/>
            <person name="Geoghagen N.S.M."/>
            <person name="Weidman J.F."/>
            <person name="Fuhrmann J.L."/>
            <person name="Nguyen D."/>
            <person name="Utterback T.R."/>
            <person name="Kelley J.M."/>
            <person name="Peterson J.D."/>
            <person name="Sadow P.W."/>
            <person name="Hanna M.C."/>
            <person name="Cotton M.D."/>
            <person name="Roberts K.M."/>
            <person name="Hurst M.A."/>
            <person name="Kaine B.P."/>
            <person name="Borodovsky M."/>
            <person name="Klenk H.-P."/>
            <person name="Fraser C.M."/>
            <person name="Smith H.O."/>
            <person name="Woese C.R."/>
            <person name="Venter J.C."/>
        </authorList>
    </citation>
    <scope>NUCLEOTIDE SEQUENCE [LARGE SCALE GENOMIC DNA]</scope>
    <source>
        <strain>ATCC 43067 / DSM 2661 / JAL-1 / JCM 10045 / NBRC 100440</strain>
    </source>
</reference>
<reference key="2">
    <citation type="journal article" date="2005" name="Nucleic Acids Res.">
        <title>Toxin-antitoxin loci are highly abundant in free-living but lost from host-associated prokaryotes.</title>
        <authorList>
            <person name="Pandey D.P."/>
            <person name="Gerdes K."/>
        </authorList>
    </citation>
    <scope>IDENTIFICATION</scope>
    <scope>POSSIBLE FUNCTION</scope>
    <source>
        <strain>ATCC 43067 / DSM 2661 / JAL-1 / JCM 10045 / NBRC 100440</strain>
    </source>
</reference>
<organism>
    <name type="scientific">Methanocaldococcus jannaschii (strain ATCC 43067 / DSM 2661 / JAL-1 / JCM 10045 / NBRC 100440)</name>
    <name type="common">Methanococcus jannaschii</name>
    <dbReference type="NCBI Taxonomy" id="243232"/>
    <lineage>
        <taxon>Archaea</taxon>
        <taxon>Methanobacteriati</taxon>
        <taxon>Methanobacteriota</taxon>
        <taxon>Methanomada group</taxon>
        <taxon>Methanococci</taxon>
        <taxon>Methanococcales</taxon>
        <taxon>Methanocaldococcaceae</taxon>
        <taxon>Methanocaldococcus</taxon>
    </lineage>
</organism>
<protein>
    <recommendedName>
        <fullName>Putative antitoxin VapB5</fullName>
    </recommendedName>
</protein>
<keyword id="KW-1003">Cell membrane</keyword>
<keyword id="KW-0472">Membrane</keyword>
<keyword id="KW-1185">Reference proteome</keyword>
<keyword id="KW-1277">Toxin-antitoxin system</keyword>
<keyword id="KW-0812">Transmembrane</keyword>
<keyword id="KW-1133">Transmembrane helix</keyword>
<dbReference type="EMBL" id="L77117">
    <property type="status" value="NOT_ANNOTATED_CDS"/>
    <property type="molecule type" value="Genomic_DNA"/>
</dbReference>
<dbReference type="InParanoid" id="P0CW39"/>
<dbReference type="Proteomes" id="UP000000805">
    <property type="component" value="Chromosome"/>
</dbReference>
<dbReference type="GO" id="GO:0005886">
    <property type="term" value="C:plasma membrane"/>
    <property type="evidence" value="ECO:0007669"/>
    <property type="project" value="UniProtKB-SubCell"/>
</dbReference>
<name>VAPB5_METJA</name>
<comment type="function">
    <text evidence="2">Possibly the antitoxin component of a type II toxin-antitoxin (TA) system. Its cognate toxin is VapC5 (Potential).</text>
</comment>
<comment type="subcellular location">
    <subcellularLocation>
        <location evidence="2">Cell membrane</location>
        <topology evidence="2">Multi-pass membrane protein</topology>
    </subcellularLocation>
</comment>
<evidence type="ECO:0000255" key="1"/>
<evidence type="ECO:0000305" key="2"/>
<proteinExistence type="predicted"/>